<organism>
    <name type="scientific">Streptococcus pyogenes serotype M12 (strain MGAS9429)</name>
    <dbReference type="NCBI Taxonomy" id="370551"/>
    <lineage>
        <taxon>Bacteria</taxon>
        <taxon>Bacillati</taxon>
        <taxon>Bacillota</taxon>
        <taxon>Bacilli</taxon>
        <taxon>Lactobacillales</taxon>
        <taxon>Streptococcaceae</taxon>
        <taxon>Streptococcus</taxon>
    </lineage>
</organism>
<evidence type="ECO:0000255" key="1">
    <source>
        <dbReference type="HAMAP-Rule" id="MF_00367"/>
    </source>
</evidence>
<evidence type="ECO:0000255" key="2">
    <source>
        <dbReference type="PROSITE-ProRule" id="PRU01050"/>
    </source>
</evidence>
<sequence>MFKSGFVAILGRPNVGKSTFLNHVMGQKIAIMSDKAQTTRNKIMGIYTTETEQIVFIDTPGIHKPKTALGDFMVESAYSTLREVETVLFMVPADEKRGKGDDMIIERLKAAKIPVILVINKIDKVHPDQLLEQIDDFRSQMDFKEVVPISALEGNNVPTLIKLLTDNLEEGFQYFPEDQITDHPERFLVSEMVREKVLHLTQQEVPHSVAVVVESMKRDEETDKVHIRATIMVERDSQKGIIIGKQGAMLKKIGKMARRDIELMLGDKVYLETWVKVKKNWRDKKLDLADFGYNEKEY</sequence>
<feature type="chain" id="PRO_1000079752" description="GTPase Era">
    <location>
        <begin position="1"/>
        <end position="298"/>
    </location>
</feature>
<feature type="domain" description="Era-type G" evidence="2">
    <location>
        <begin position="3"/>
        <end position="170"/>
    </location>
</feature>
<feature type="domain" description="KH type-2" evidence="1">
    <location>
        <begin position="201"/>
        <end position="279"/>
    </location>
</feature>
<feature type="region of interest" description="G1" evidence="2">
    <location>
        <begin position="11"/>
        <end position="18"/>
    </location>
</feature>
<feature type="region of interest" description="G2" evidence="2">
    <location>
        <begin position="37"/>
        <end position="41"/>
    </location>
</feature>
<feature type="region of interest" description="G3" evidence="2">
    <location>
        <begin position="58"/>
        <end position="61"/>
    </location>
</feature>
<feature type="region of interest" description="G4" evidence="2">
    <location>
        <begin position="120"/>
        <end position="123"/>
    </location>
</feature>
<feature type="region of interest" description="G5" evidence="2">
    <location>
        <begin position="149"/>
        <end position="151"/>
    </location>
</feature>
<feature type="binding site" evidence="1">
    <location>
        <begin position="11"/>
        <end position="18"/>
    </location>
    <ligand>
        <name>GTP</name>
        <dbReference type="ChEBI" id="CHEBI:37565"/>
    </ligand>
</feature>
<feature type="binding site" evidence="1">
    <location>
        <begin position="58"/>
        <end position="62"/>
    </location>
    <ligand>
        <name>GTP</name>
        <dbReference type="ChEBI" id="CHEBI:37565"/>
    </ligand>
</feature>
<feature type="binding site" evidence="1">
    <location>
        <begin position="120"/>
        <end position="123"/>
    </location>
    <ligand>
        <name>GTP</name>
        <dbReference type="ChEBI" id="CHEBI:37565"/>
    </ligand>
</feature>
<dbReference type="EMBL" id="CP000259">
    <property type="protein sequence ID" value="ABF31578.1"/>
    <property type="molecule type" value="Genomic_DNA"/>
</dbReference>
<dbReference type="RefSeq" id="WP_002985743.1">
    <property type="nucleotide sequence ID" value="NC_008021.1"/>
</dbReference>
<dbReference type="SMR" id="Q1JN21"/>
<dbReference type="GeneID" id="69901289"/>
<dbReference type="KEGG" id="spk:MGAS9429_Spy0390"/>
<dbReference type="HOGENOM" id="CLU_038009_1_0_9"/>
<dbReference type="Proteomes" id="UP000002433">
    <property type="component" value="Chromosome"/>
</dbReference>
<dbReference type="GO" id="GO:0005829">
    <property type="term" value="C:cytosol"/>
    <property type="evidence" value="ECO:0007669"/>
    <property type="project" value="TreeGrafter"/>
</dbReference>
<dbReference type="GO" id="GO:0005886">
    <property type="term" value="C:plasma membrane"/>
    <property type="evidence" value="ECO:0007669"/>
    <property type="project" value="UniProtKB-SubCell"/>
</dbReference>
<dbReference type="GO" id="GO:0005525">
    <property type="term" value="F:GTP binding"/>
    <property type="evidence" value="ECO:0007669"/>
    <property type="project" value="UniProtKB-UniRule"/>
</dbReference>
<dbReference type="GO" id="GO:0003924">
    <property type="term" value="F:GTPase activity"/>
    <property type="evidence" value="ECO:0007669"/>
    <property type="project" value="UniProtKB-UniRule"/>
</dbReference>
<dbReference type="GO" id="GO:0043024">
    <property type="term" value="F:ribosomal small subunit binding"/>
    <property type="evidence" value="ECO:0007669"/>
    <property type="project" value="TreeGrafter"/>
</dbReference>
<dbReference type="GO" id="GO:0070181">
    <property type="term" value="F:small ribosomal subunit rRNA binding"/>
    <property type="evidence" value="ECO:0007669"/>
    <property type="project" value="UniProtKB-UniRule"/>
</dbReference>
<dbReference type="GO" id="GO:0000028">
    <property type="term" value="P:ribosomal small subunit assembly"/>
    <property type="evidence" value="ECO:0007669"/>
    <property type="project" value="TreeGrafter"/>
</dbReference>
<dbReference type="CDD" id="cd04163">
    <property type="entry name" value="Era"/>
    <property type="match status" value="1"/>
</dbReference>
<dbReference type="CDD" id="cd22534">
    <property type="entry name" value="KH-II_Era"/>
    <property type="match status" value="1"/>
</dbReference>
<dbReference type="FunFam" id="3.30.300.20:FF:000003">
    <property type="entry name" value="GTPase Era"/>
    <property type="match status" value="1"/>
</dbReference>
<dbReference type="FunFam" id="3.40.50.300:FF:000094">
    <property type="entry name" value="GTPase Era"/>
    <property type="match status" value="1"/>
</dbReference>
<dbReference type="Gene3D" id="3.30.300.20">
    <property type="match status" value="1"/>
</dbReference>
<dbReference type="Gene3D" id="3.40.50.300">
    <property type="entry name" value="P-loop containing nucleotide triphosphate hydrolases"/>
    <property type="match status" value="1"/>
</dbReference>
<dbReference type="HAMAP" id="MF_00367">
    <property type="entry name" value="GTPase_Era"/>
    <property type="match status" value="1"/>
</dbReference>
<dbReference type="InterPro" id="IPR030388">
    <property type="entry name" value="G_ERA_dom"/>
</dbReference>
<dbReference type="InterPro" id="IPR006073">
    <property type="entry name" value="GTP-bd"/>
</dbReference>
<dbReference type="InterPro" id="IPR005662">
    <property type="entry name" value="GTPase_Era-like"/>
</dbReference>
<dbReference type="InterPro" id="IPR015946">
    <property type="entry name" value="KH_dom-like_a/b"/>
</dbReference>
<dbReference type="InterPro" id="IPR004044">
    <property type="entry name" value="KH_dom_type_2"/>
</dbReference>
<dbReference type="InterPro" id="IPR009019">
    <property type="entry name" value="KH_sf_prok-type"/>
</dbReference>
<dbReference type="InterPro" id="IPR027417">
    <property type="entry name" value="P-loop_NTPase"/>
</dbReference>
<dbReference type="InterPro" id="IPR005225">
    <property type="entry name" value="Small_GTP-bd"/>
</dbReference>
<dbReference type="NCBIfam" id="TIGR00436">
    <property type="entry name" value="era"/>
    <property type="match status" value="1"/>
</dbReference>
<dbReference type="NCBIfam" id="NF000908">
    <property type="entry name" value="PRK00089.1"/>
    <property type="match status" value="1"/>
</dbReference>
<dbReference type="NCBIfam" id="TIGR00231">
    <property type="entry name" value="small_GTP"/>
    <property type="match status" value="1"/>
</dbReference>
<dbReference type="PANTHER" id="PTHR42698">
    <property type="entry name" value="GTPASE ERA"/>
    <property type="match status" value="1"/>
</dbReference>
<dbReference type="PANTHER" id="PTHR42698:SF1">
    <property type="entry name" value="GTPASE ERA, MITOCHONDRIAL"/>
    <property type="match status" value="1"/>
</dbReference>
<dbReference type="Pfam" id="PF07650">
    <property type="entry name" value="KH_2"/>
    <property type="match status" value="1"/>
</dbReference>
<dbReference type="Pfam" id="PF01926">
    <property type="entry name" value="MMR_HSR1"/>
    <property type="match status" value="1"/>
</dbReference>
<dbReference type="SUPFAM" id="SSF52540">
    <property type="entry name" value="P-loop containing nucleoside triphosphate hydrolases"/>
    <property type="match status" value="1"/>
</dbReference>
<dbReference type="SUPFAM" id="SSF54814">
    <property type="entry name" value="Prokaryotic type KH domain (KH-domain type II)"/>
    <property type="match status" value="1"/>
</dbReference>
<dbReference type="PROSITE" id="PS51713">
    <property type="entry name" value="G_ERA"/>
    <property type="match status" value="1"/>
</dbReference>
<dbReference type="PROSITE" id="PS50823">
    <property type="entry name" value="KH_TYPE_2"/>
    <property type="match status" value="1"/>
</dbReference>
<protein>
    <recommendedName>
        <fullName evidence="1">GTPase Era</fullName>
    </recommendedName>
</protein>
<gene>
    <name evidence="1" type="primary">era</name>
    <name type="ordered locus">MGAS9429_Spy0390</name>
</gene>
<reference key="1">
    <citation type="journal article" date="2006" name="Proc. Natl. Acad. Sci. U.S.A.">
        <title>Molecular genetic anatomy of inter- and intraserotype variation in the human bacterial pathogen group A Streptococcus.</title>
        <authorList>
            <person name="Beres S.B."/>
            <person name="Richter E.W."/>
            <person name="Nagiec M.J."/>
            <person name="Sumby P."/>
            <person name="Porcella S.F."/>
            <person name="DeLeo F.R."/>
            <person name="Musser J.M."/>
        </authorList>
    </citation>
    <scope>NUCLEOTIDE SEQUENCE [LARGE SCALE GENOMIC DNA]</scope>
    <source>
        <strain>MGAS9429</strain>
    </source>
</reference>
<accession>Q1JN21</accession>
<proteinExistence type="inferred from homology"/>
<comment type="function">
    <text evidence="1">An essential GTPase that binds both GDP and GTP, with rapid nucleotide exchange. Plays a role in 16S rRNA processing and 30S ribosomal subunit biogenesis and possibly also in cell cycle regulation and energy metabolism.</text>
</comment>
<comment type="subunit">
    <text evidence="1">Monomer.</text>
</comment>
<comment type="subcellular location">
    <subcellularLocation>
        <location>Cytoplasm</location>
    </subcellularLocation>
    <subcellularLocation>
        <location evidence="1">Cell membrane</location>
        <topology evidence="1">Peripheral membrane protein</topology>
    </subcellularLocation>
</comment>
<comment type="similarity">
    <text evidence="1 2">Belongs to the TRAFAC class TrmE-Era-EngA-EngB-Septin-like GTPase superfamily. Era GTPase family.</text>
</comment>
<keyword id="KW-1003">Cell membrane</keyword>
<keyword id="KW-0963">Cytoplasm</keyword>
<keyword id="KW-0342">GTP-binding</keyword>
<keyword id="KW-0472">Membrane</keyword>
<keyword id="KW-0547">Nucleotide-binding</keyword>
<keyword id="KW-0690">Ribosome biogenesis</keyword>
<keyword id="KW-0694">RNA-binding</keyword>
<keyword id="KW-0699">rRNA-binding</keyword>
<name>ERA_STRPC</name>